<proteinExistence type="inferred from homology"/>
<organism>
    <name type="scientific">Frankia alni (strain DSM 45986 / CECT 9034 / ACN14a)</name>
    <dbReference type="NCBI Taxonomy" id="326424"/>
    <lineage>
        <taxon>Bacteria</taxon>
        <taxon>Bacillati</taxon>
        <taxon>Actinomycetota</taxon>
        <taxon>Actinomycetes</taxon>
        <taxon>Frankiales</taxon>
        <taxon>Frankiaceae</taxon>
        <taxon>Frankia</taxon>
    </lineage>
</organism>
<evidence type="ECO:0000255" key="1">
    <source>
        <dbReference type="HAMAP-Rule" id="MF_02106"/>
    </source>
</evidence>
<evidence type="ECO:0000256" key="2">
    <source>
        <dbReference type="SAM" id="MobiDB-lite"/>
    </source>
</evidence>
<keyword id="KW-0175">Coiled coil</keyword>
<keyword id="KW-1017">Isopeptide bond</keyword>
<keyword id="KW-1185">Reference proteome</keyword>
<keyword id="KW-0833">Ubl conjugation pathway</keyword>
<reference key="1">
    <citation type="journal article" date="2007" name="Genome Res.">
        <title>Genome characteristics of facultatively symbiotic Frankia sp. strains reflect host range and host plant biogeography.</title>
        <authorList>
            <person name="Normand P."/>
            <person name="Lapierre P."/>
            <person name="Tisa L.S."/>
            <person name="Gogarten J.P."/>
            <person name="Alloisio N."/>
            <person name="Bagnarol E."/>
            <person name="Bassi C.A."/>
            <person name="Berry A.M."/>
            <person name="Bickhart D.M."/>
            <person name="Choisne N."/>
            <person name="Couloux A."/>
            <person name="Cournoyer B."/>
            <person name="Cruveiller S."/>
            <person name="Daubin V."/>
            <person name="Demange N."/>
            <person name="Francino M.P."/>
            <person name="Goltsman E."/>
            <person name="Huang Y."/>
            <person name="Kopp O.R."/>
            <person name="Labarre L."/>
            <person name="Lapidus A."/>
            <person name="Lavire C."/>
            <person name="Marechal J."/>
            <person name="Martinez M."/>
            <person name="Mastronunzio J.E."/>
            <person name="Mullin B.C."/>
            <person name="Niemann J."/>
            <person name="Pujic P."/>
            <person name="Rawnsley T."/>
            <person name="Rouy Z."/>
            <person name="Schenowitz C."/>
            <person name="Sellstedt A."/>
            <person name="Tavares F."/>
            <person name="Tomkins J.P."/>
            <person name="Vallenet D."/>
            <person name="Valverde C."/>
            <person name="Wall L.G."/>
            <person name="Wang Y."/>
            <person name="Medigue C."/>
            <person name="Benson D.R."/>
        </authorList>
    </citation>
    <scope>NUCLEOTIDE SEQUENCE [LARGE SCALE GENOMIC DNA]</scope>
    <source>
        <strain>DSM 45986 / CECT 9034 / ACN14a</strain>
    </source>
</reference>
<protein>
    <recommendedName>
        <fullName evidence="1">Prokaryotic ubiquitin-like protein Pup</fullName>
    </recommendedName>
    <alternativeName>
        <fullName evidence="1">Bacterial ubiquitin-like modifier</fullName>
    </alternativeName>
</protein>
<sequence>MATRDSGGGQQHTNRHADEVEEVAAEGNDASDLKERHEKLSEDVDSLLDEIDDVLEENAEEFVKGYVQKGGE</sequence>
<name>PUP_FRAAA</name>
<accession>Q0RLT9</accession>
<comment type="function">
    <text evidence="1">Protein modifier that is covalently attached to lysine residues of substrate proteins, thereby targeting them for proteasomal degradation. The tagging system is termed pupylation.</text>
</comment>
<comment type="pathway">
    <text evidence="1">Protein degradation; proteasomal Pup-dependent pathway.</text>
</comment>
<comment type="subunit">
    <text evidence="1">Strongly interacts with the proteasome-associated ATPase ARC through a hydrophobic interface; the interacting region of Pup lies in its C-terminal half. There is one Pup binding site per ARC hexamer ring.</text>
</comment>
<comment type="domain">
    <text evidence="1">The N-terminal unstructured half of Pup provides a signal required to initiate unfolding and degradation by the proteasome but is not needed for pupylation, while the C-terminal helical half of Pup interacts with ARC to target proteins to the proteasome.</text>
</comment>
<comment type="similarity">
    <text evidence="1">Belongs to the prokaryotic ubiquitin-like protein family.</text>
</comment>
<gene>
    <name evidence="1" type="primary">pup</name>
    <name type="ordered locus">FRAAL2871</name>
</gene>
<feature type="chain" id="PRO_0000390581" description="Prokaryotic ubiquitin-like protein Pup">
    <location>
        <begin position="1"/>
        <end position="72"/>
    </location>
</feature>
<feature type="region of interest" description="Disordered" evidence="2">
    <location>
        <begin position="1"/>
        <end position="41"/>
    </location>
</feature>
<feature type="region of interest" description="ARC ATPase binding" evidence="1">
    <location>
        <begin position="28"/>
        <end position="66"/>
    </location>
</feature>
<feature type="coiled-coil region" evidence="1">
    <location>
        <begin position="21"/>
        <end position="61"/>
    </location>
</feature>
<feature type="compositionally biased region" description="Gly residues" evidence="2">
    <location>
        <begin position="1"/>
        <end position="10"/>
    </location>
</feature>
<feature type="compositionally biased region" description="Basic and acidic residues" evidence="2">
    <location>
        <begin position="31"/>
        <end position="41"/>
    </location>
</feature>
<feature type="cross-link" description="Isoglutamyl lysine isopeptide (Glu-Lys) (interchain with K-? in acceptor proteins)" evidence="1">
    <location>
        <position position="72"/>
    </location>
</feature>
<dbReference type="EMBL" id="CT573213">
    <property type="protein sequence ID" value="CAJ61515.1"/>
    <property type="molecule type" value="Genomic_DNA"/>
</dbReference>
<dbReference type="RefSeq" id="WP_011604017.1">
    <property type="nucleotide sequence ID" value="NC_008278.1"/>
</dbReference>
<dbReference type="SMR" id="Q0RLT9"/>
<dbReference type="STRING" id="326424.FRAAL2871"/>
<dbReference type="KEGG" id="fal:FRAAL2871"/>
<dbReference type="eggNOG" id="ENOG50333JS">
    <property type="taxonomic scope" value="Bacteria"/>
</dbReference>
<dbReference type="HOGENOM" id="CLU_183816_2_0_11"/>
<dbReference type="OrthoDB" id="3254977at2"/>
<dbReference type="UniPathway" id="UPA00997"/>
<dbReference type="Proteomes" id="UP000000657">
    <property type="component" value="Chromosome"/>
</dbReference>
<dbReference type="GO" id="GO:0070628">
    <property type="term" value="F:proteasome binding"/>
    <property type="evidence" value="ECO:0007669"/>
    <property type="project" value="UniProtKB-UniRule"/>
</dbReference>
<dbReference type="GO" id="GO:0031386">
    <property type="term" value="F:protein tag activity"/>
    <property type="evidence" value="ECO:0007669"/>
    <property type="project" value="UniProtKB-UniRule"/>
</dbReference>
<dbReference type="GO" id="GO:0019941">
    <property type="term" value="P:modification-dependent protein catabolic process"/>
    <property type="evidence" value="ECO:0007669"/>
    <property type="project" value="UniProtKB-UniRule"/>
</dbReference>
<dbReference type="GO" id="GO:0010498">
    <property type="term" value="P:proteasomal protein catabolic process"/>
    <property type="evidence" value="ECO:0007669"/>
    <property type="project" value="UniProtKB-UniRule"/>
</dbReference>
<dbReference type="GO" id="GO:0070490">
    <property type="term" value="P:protein pupylation"/>
    <property type="evidence" value="ECO:0007669"/>
    <property type="project" value="UniProtKB-UniRule"/>
</dbReference>
<dbReference type="HAMAP" id="MF_02106">
    <property type="entry name" value="Pup"/>
    <property type="match status" value="1"/>
</dbReference>
<dbReference type="InterPro" id="IPR008515">
    <property type="entry name" value="Ubiquitin-like_Pup"/>
</dbReference>
<dbReference type="NCBIfam" id="TIGR03687">
    <property type="entry name" value="pupylate_cterm"/>
    <property type="match status" value="1"/>
</dbReference>
<dbReference type="Pfam" id="PF05639">
    <property type="entry name" value="Pup"/>
    <property type="match status" value="1"/>
</dbReference>